<organism>
    <name type="scientific">Yersinia pseudotuberculosis serotype IB (strain PB1/+)</name>
    <dbReference type="NCBI Taxonomy" id="502801"/>
    <lineage>
        <taxon>Bacteria</taxon>
        <taxon>Pseudomonadati</taxon>
        <taxon>Pseudomonadota</taxon>
        <taxon>Gammaproteobacteria</taxon>
        <taxon>Enterobacterales</taxon>
        <taxon>Yersiniaceae</taxon>
        <taxon>Yersinia</taxon>
    </lineage>
</organism>
<gene>
    <name evidence="1" type="primary">engB</name>
    <name type="ordered locus">YPTS_0020</name>
</gene>
<proteinExistence type="inferred from homology"/>
<accession>B2JYK5</accession>
<comment type="function">
    <text evidence="1">Necessary for normal cell division and for the maintenance of normal septation.</text>
</comment>
<comment type="cofactor">
    <cofactor evidence="1">
        <name>Mg(2+)</name>
        <dbReference type="ChEBI" id="CHEBI:18420"/>
    </cofactor>
</comment>
<comment type="similarity">
    <text evidence="1">Belongs to the TRAFAC class TrmE-Era-EngA-EngB-Septin-like GTPase superfamily. EngB GTPase family.</text>
</comment>
<dbReference type="EMBL" id="CP001048">
    <property type="protein sequence ID" value="ACC87019.1"/>
    <property type="molecule type" value="Genomic_DNA"/>
</dbReference>
<dbReference type="SMR" id="B2JYK5"/>
<dbReference type="KEGG" id="ypb:YPTS_0020"/>
<dbReference type="PATRIC" id="fig|502801.10.peg.3696"/>
<dbReference type="GO" id="GO:0005829">
    <property type="term" value="C:cytosol"/>
    <property type="evidence" value="ECO:0007669"/>
    <property type="project" value="TreeGrafter"/>
</dbReference>
<dbReference type="GO" id="GO:0005525">
    <property type="term" value="F:GTP binding"/>
    <property type="evidence" value="ECO:0007669"/>
    <property type="project" value="UniProtKB-UniRule"/>
</dbReference>
<dbReference type="GO" id="GO:0046872">
    <property type="term" value="F:metal ion binding"/>
    <property type="evidence" value="ECO:0007669"/>
    <property type="project" value="UniProtKB-KW"/>
</dbReference>
<dbReference type="GO" id="GO:0000917">
    <property type="term" value="P:division septum assembly"/>
    <property type="evidence" value="ECO:0007669"/>
    <property type="project" value="UniProtKB-KW"/>
</dbReference>
<dbReference type="CDD" id="cd01876">
    <property type="entry name" value="YihA_EngB"/>
    <property type="match status" value="1"/>
</dbReference>
<dbReference type="FunFam" id="3.40.50.300:FF:000098">
    <property type="entry name" value="Probable GTP-binding protein EngB"/>
    <property type="match status" value="1"/>
</dbReference>
<dbReference type="Gene3D" id="3.40.50.300">
    <property type="entry name" value="P-loop containing nucleotide triphosphate hydrolases"/>
    <property type="match status" value="1"/>
</dbReference>
<dbReference type="HAMAP" id="MF_00321">
    <property type="entry name" value="GTPase_EngB"/>
    <property type="match status" value="1"/>
</dbReference>
<dbReference type="InterPro" id="IPR030393">
    <property type="entry name" value="G_ENGB_dom"/>
</dbReference>
<dbReference type="InterPro" id="IPR006073">
    <property type="entry name" value="GTP-bd"/>
</dbReference>
<dbReference type="InterPro" id="IPR019987">
    <property type="entry name" value="GTP-bd_ribosome_bio_YsxC"/>
</dbReference>
<dbReference type="InterPro" id="IPR027417">
    <property type="entry name" value="P-loop_NTPase"/>
</dbReference>
<dbReference type="NCBIfam" id="TIGR03598">
    <property type="entry name" value="GTPase_YsxC"/>
    <property type="match status" value="1"/>
</dbReference>
<dbReference type="PANTHER" id="PTHR11649:SF13">
    <property type="entry name" value="ENGB-TYPE G DOMAIN-CONTAINING PROTEIN"/>
    <property type="match status" value="1"/>
</dbReference>
<dbReference type="PANTHER" id="PTHR11649">
    <property type="entry name" value="MSS1/TRME-RELATED GTP-BINDING PROTEIN"/>
    <property type="match status" value="1"/>
</dbReference>
<dbReference type="Pfam" id="PF01926">
    <property type="entry name" value="MMR_HSR1"/>
    <property type="match status" value="1"/>
</dbReference>
<dbReference type="SUPFAM" id="SSF52540">
    <property type="entry name" value="P-loop containing nucleoside triphosphate hydrolases"/>
    <property type="match status" value="1"/>
</dbReference>
<dbReference type="PROSITE" id="PS51706">
    <property type="entry name" value="G_ENGB"/>
    <property type="match status" value="1"/>
</dbReference>
<evidence type="ECO:0000255" key="1">
    <source>
        <dbReference type="HAMAP-Rule" id="MF_00321"/>
    </source>
</evidence>
<sequence>MTIRNYNYHMTHFVISAPDIRHLPRDEGIEVAFAGRSNAGKSSALNTLTNQKGLARTSKTPGRTQLINLFEVVDGVRLVDLPGYGYAEVPEEMKLKWQRALGEYLQKRNCLKGLVVLMDIRHPLKDLDQQMITWAVAVGTPVLLLLTKADKLASGARKAQLNLVREAIIPFMGDIQVEAFSSLKKIGVDKLREKLDTWFSEIPPEVMAEEFDGEGE</sequence>
<reference key="1">
    <citation type="submission" date="2008-04" db="EMBL/GenBank/DDBJ databases">
        <title>Complete sequence of Yersinia pseudotuberculosis PB1/+.</title>
        <authorList>
            <person name="Copeland A."/>
            <person name="Lucas S."/>
            <person name="Lapidus A."/>
            <person name="Glavina del Rio T."/>
            <person name="Dalin E."/>
            <person name="Tice H."/>
            <person name="Bruce D."/>
            <person name="Goodwin L."/>
            <person name="Pitluck S."/>
            <person name="Munk A.C."/>
            <person name="Brettin T."/>
            <person name="Detter J.C."/>
            <person name="Han C."/>
            <person name="Tapia R."/>
            <person name="Schmutz J."/>
            <person name="Larimer F."/>
            <person name="Land M."/>
            <person name="Hauser L."/>
            <person name="Challacombe J.F."/>
            <person name="Green L."/>
            <person name="Lindler L.E."/>
            <person name="Nikolich M.P."/>
            <person name="Richardson P."/>
        </authorList>
    </citation>
    <scope>NUCLEOTIDE SEQUENCE [LARGE SCALE GENOMIC DNA]</scope>
    <source>
        <strain>PB1/+</strain>
    </source>
</reference>
<feature type="chain" id="PRO_1000116017" description="Probable GTP-binding protein EngB">
    <location>
        <begin position="1"/>
        <end position="216"/>
    </location>
</feature>
<feature type="domain" description="EngB-type G" evidence="1">
    <location>
        <begin position="27"/>
        <end position="201"/>
    </location>
</feature>
<feature type="binding site" evidence="1">
    <location>
        <begin position="35"/>
        <end position="42"/>
    </location>
    <ligand>
        <name>GTP</name>
        <dbReference type="ChEBI" id="CHEBI:37565"/>
    </ligand>
</feature>
<feature type="binding site" evidence="1">
    <location>
        <position position="42"/>
    </location>
    <ligand>
        <name>Mg(2+)</name>
        <dbReference type="ChEBI" id="CHEBI:18420"/>
    </ligand>
</feature>
<feature type="binding site" evidence="1">
    <location>
        <begin position="62"/>
        <end position="66"/>
    </location>
    <ligand>
        <name>GTP</name>
        <dbReference type="ChEBI" id="CHEBI:37565"/>
    </ligand>
</feature>
<feature type="binding site" evidence="1">
    <location>
        <position position="64"/>
    </location>
    <ligand>
        <name>Mg(2+)</name>
        <dbReference type="ChEBI" id="CHEBI:18420"/>
    </ligand>
</feature>
<feature type="binding site" evidence="1">
    <location>
        <begin position="80"/>
        <end position="83"/>
    </location>
    <ligand>
        <name>GTP</name>
        <dbReference type="ChEBI" id="CHEBI:37565"/>
    </ligand>
</feature>
<feature type="binding site" evidence="1">
    <location>
        <begin position="147"/>
        <end position="150"/>
    </location>
    <ligand>
        <name>GTP</name>
        <dbReference type="ChEBI" id="CHEBI:37565"/>
    </ligand>
</feature>
<feature type="binding site" evidence="1">
    <location>
        <begin position="180"/>
        <end position="182"/>
    </location>
    <ligand>
        <name>GTP</name>
        <dbReference type="ChEBI" id="CHEBI:37565"/>
    </ligand>
</feature>
<protein>
    <recommendedName>
        <fullName evidence="1">Probable GTP-binding protein EngB</fullName>
    </recommendedName>
</protein>
<keyword id="KW-0131">Cell cycle</keyword>
<keyword id="KW-0132">Cell division</keyword>
<keyword id="KW-0342">GTP-binding</keyword>
<keyword id="KW-0460">Magnesium</keyword>
<keyword id="KW-0479">Metal-binding</keyword>
<keyword id="KW-0547">Nucleotide-binding</keyword>
<keyword id="KW-0717">Septation</keyword>
<name>ENGB_YERPB</name>